<comment type="function">
    <text evidence="2">Component of the large ribosomal subunit.</text>
</comment>
<comment type="subunit">
    <text evidence="2">Component of the large ribosomal subunit.</text>
</comment>
<comment type="subcellular location">
    <subcellularLocation>
        <location evidence="2">Cytoplasm</location>
        <location evidence="2">Cytosol</location>
    </subcellularLocation>
    <subcellularLocation>
        <location evidence="2">Cytoplasm</location>
    </subcellularLocation>
    <subcellularLocation>
        <location evidence="1">Rough endoplasmic reticulum</location>
    </subcellularLocation>
    <text evidence="1 2">Detected on cytosolic polysomes (By similarity). Detected in ribosomes that are associated with the rough endoplasmic reticulum (By similarity).</text>
</comment>
<comment type="similarity">
    <text evidence="3">Belongs to the eukaryotic ribosomal protein eL27 family.</text>
</comment>
<feature type="chain" id="PRO_0000126082" description="Large ribosomal subunit protein eL27">
    <location>
        <begin position="1"/>
        <end position="136"/>
    </location>
</feature>
<feature type="domain" description="KOW">
    <location>
        <begin position="5"/>
        <end position="40"/>
    </location>
</feature>
<name>RL27_HIPCM</name>
<gene>
    <name type="primary">rpl27</name>
</gene>
<organism>
    <name type="scientific">Hippocampus comes</name>
    <name type="common">Tiger tail seahorse</name>
    <dbReference type="NCBI Taxonomy" id="109280"/>
    <lineage>
        <taxon>Eukaryota</taxon>
        <taxon>Metazoa</taxon>
        <taxon>Chordata</taxon>
        <taxon>Craniata</taxon>
        <taxon>Vertebrata</taxon>
        <taxon>Euteleostomi</taxon>
        <taxon>Actinopterygii</taxon>
        <taxon>Neopterygii</taxon>
        <taxon>Teleostei</taxon>
        <taxon>Neoteleostei</taxon>
        <taxon>Acanthomorphata</taxon>
        <taxon>Syngnathiaria</taxon>
        <taxon>Syngnathiformes</taxon>
        <taxon>Syngnathoidei</taxon>
        <taxon>Syngnathidae</taxon>
        <taxon>Hippocampus</taxon>
    </lineage>
</organism>
<dbReference type="EMBL" id="AY437394">
    <property type="protein sequence ID" value="AAR11383.1"/>
    <property type="molecule type" value="mRNA"/>
</dbReference>
<dbReference type="RefSeq" id="XP_019745385.1">
    <property type="nucleotide sequence ID" value="XM_019889826.1"/>
</dbReference>
<dbReference type="SMR" id="P61359"/>
<dbReference type="STRING" id="109280.ENSHCOP00000021257"/>
<dbReference type="Ensembl" id="ENSHCOT00000004111.1">
    <property type="protein sequence ID" value="ENSHCOP00000021257.1"/>
    <property type="gene ID" value="ENSHCOG00000007922.1"/>
</dbReference>
<dbReference type="GeneID" id="109527748"/>
<dbReference type="KEGG" id="hcq:109527748"/>
<dbReference type="CTD" id="6155"/>
<dbReference type="GeneTree" id="ENSGT00390000010721"/>
<dbReference type="OMA" id="NQWFFTK"/>
<dbReference type="OrthoDB" id="2365484at2759"/>
<dbReference type="Proteomes" id="UP000264820">
    <property type="component" value="Unplaced"/>
</dbReference>
<dbReference type="GO" id="GO:0098556">
    <property type="term" value="C:cytoplasmic side of rough endoplasmic reticulum membrane"/>
    <property type="evidence" value="ECO:0000250"/>
    <property type="project" value="UniProtKB"/>
</dbReference>
<dbReference type="GO" id="GO:0005829">
    <property type="term" value="C:cytosol"/>
    <property type="evidence" value="ECO:0007669"/>
    <property type="project" value="UniProtKB-SubCell"/>
</dbReference>
<dbReference type="GO" id="GO:0015934">
    <property type="term" value="C:large ribosomal subunit"/>
    <property type="evidence" value="ECO:0000250"/>
    <property type="project" value="UniProtKB"/>
</dbReference>
<dbReference type="GO" id="GO:0003735">
    <property type="term" value="F:structural constituent of ribosome"/>
    <property type="evidence" value="ECO:0007669"/>
    <property type="project" value="InterPro"/>
</dbReference>
<dbReference type="GO" id="GO:0030218">
    <property type="term" value="P:erythrocyte differentiation"/>
    <property type="evidence" value="ECO:0007669"/>
    <property type="project" value="Ensembl"/>
</dbReference>
<dbReference type="GO" id="GO:0006412">
    <property type="term" value="P:translation"/>
    <property type="evidence" value="ECO:0007669"/>
    <property type="project" value="InterPro"/>
</dbReference>
<dbReference type="CDD" id="cd06090">
    <property type="entry name" value="KOW_RPL27"/>
    <property type="match status" value="1"/>
</dbReference>
<dbReference type="FunFam" id="2.30.30.770:FF:000001">
    <property type="entry name" value="60S ribosomal protein L27"/>
    <property type="match status" value="1"/>
</dbReference>
<dbReference type="Gene3D" id="2.30.30.770">
    <property type="match status" value="1"/>
</dbReference>
<dbReference type="InterPro" id="IPR005824">
    <property type="entry name" value="KOW"/>
</dbReference>
<dbReference type="InterPro" id="IPR001141">
    <property type="entry name" value="Ribosomal_eL27"/>
</dbReference>
<dbReference type="InterPro" id="IPR018262">
    <property type="entry name" value="Ribosomal_eL27_CS"/>
</dbReference>
<dbReference type="InterPro" id="IPR041991">
    <property type="entry name" value="Ribosomal_eL27_KOW"/>
</dbReference>
<dbReference type="InterPro" id="IPR038655">
    <property type="entry name" value="Ribosomal_eL27_sf"/>
</dbReference>
<dbReference type="InterPro" id="IPR008991">
    <property type="entry name" value="Translation_prot_SH3-like_sf"/>
</dbReference>
<dbReference type="PANTHER" id="PTHR10497">
    <property type="entry name" value="60S RIBOSOMAL PROTEIN L27"/>
    <property type="match status" value="1"/>
</dbReference>
<dbReference type="Pfam" id="PF00467">
    <property type="entry name" value="KOW"/>
    <property type="match status" value="1"/>
</dbReference>
<dbReference type="Pfam" id="PF01777">
    <property type="entry name" value="Ribosomal_L27e"/>
    <property type="match status" value="1"/>
</dbReference>
<dbReference type="SMART" id="SM00739">
    <property type="entry name" value="KOW"/>
    <property type="match status" value="1"/>
</dbReference>
<dbReference type="SUPFAM" id="SSF50104">
    <property type="entry name" value="Translation proteins SH3-like domain"/>
    <property type="match status" value="1"/>
</dbReference>
<dbReference type="PROSITE" id="PS01107">
    <property type="entry name" value="RIBOSOMAL_L27E"/>
    <property type="match status" value="1"/>
</dbReference>
<protein>
    <recommendedName>
        <fullName evidence="3">Large ribosomal subunit protein eL27</fullName>
    </recommendedName>
    <alternativeName>
        <fullName>60S ribosomal protein L27</fullName>
    </alternativeName>
</protein>
<evidence type="ECO:0000250" key="1">
    <source>
        <dbReference type="UniProtKB" id="A1XQU5"/>
    </source>
</evidence>
<evidence type="ECO:0000250" key="2">
    <source>
        <dbReference type="UniProtKB" id="P61353"/>
    </source>
</evidence>
<evidence type="ECO:0000305" key="3"/>
<reference key="1">
    <citation type="journal article" date="2005" name="FEBS J.">
        <title>The male seahorse synthesizes and secretes a novel C-type lectin into the brood pouch during early pregnancy.</title>
        <authorList>
            <person name="Melamed P."/>
            <person name="Xue Y."/>
            <person name="Poon J.F."/>
            <person name="Wu Q."/>
            <person name="Xie H."/>
            <person name="Yeo J."/>
            <person name="Foo T.W."/>
            <person name="Chua H.K."/>
        </authorList>
    </citation>
    <scope>NUCLEOTIDE SEQUENCE [MRNA]</scope>
</reference>
<proteinExistence type="evidence at transcript level"/>
<accession>P61359</accession>
<keyword id="KW-0963">Cytoplasm</keyword>
<keyword id="KW-0256">Endoplasmic reticulum</keyword>
<keyword id="KW-0687">Ribonucleoprotein</keyword>
<keyword id="KW-0689">Ribosomal protein</keyword>
<sequence>MGKFMKPGKVVMVLAGRYAGRKAVIVKNIDDGTADRPYSHALVAGIDRYPRKVTAPMGKKKIAKRSKIKAFVKVYNYNHLMPTRYSVDIPLDKTVVNKDVFRDPALKSKARREAKVKFEERYKTGKNKWFFQKLRF</sequence>